<comment type="function">
    <text evidence="3">Secreted effector that completely suppresses the host cell death induced by cell death-inducing proteins.</text>
</comment>
<comment type="subcellular location">
    <subcellularLocation>
        <location evidence="3">Secreted</location>
    </subcellularLocation>
    <subcellularLocation>
        <location evidence="3">Host nucleus</location>
    </subcellularLocation>
    <subcellularLocation>
        <location evidence="3">Host cytoplasm</location>
    </subcellularLocation>
    <text evidence="3">Localizes to speckle-like structures within the nucleus.</text>
</comment>
<comment type="domain">
    <text evidence="6">Has the canonical translocation RxLR motif, but lacks the canonical EER motif, which characterizes most oomycete effectors identified so far.</text>
</comment>
<comment type="similarity">
    <text evidence="5">Belongs to the RxLR effector family.</text>
</comment>
<proteinExistence type="evidence at transcript level"/>
<keyword id="KW-0325">Glycoprotein</keyword>
<keyword id="KW-1035">Host cytoplasm</keyword>
<keyword id="KW-1048">Host nucleus</keyword>
<keyword id="KW-0964">Secreted</keyword>
<keyword id="KW-0732">Signal</keyword>
<keyword id="KW-0843">Virulence</keyword>
<organism>
    <name type="scientific">Plasmopara viticola</name>
    <name type="common">Downy mildew of grapevine</name>
    <name type="synonym">Botrytis viticola</name>
    <dbReference type="NCBI Taxonomy" id="143451"/>
    <lineage>
        <taxon>Eukaryota</taxon>
        <taxon>Sar</taxon>
        <taxon>Stramenopiles</taxon>
        <taxon>Oomycota</taxon>
        <taxon>Peronosporales</taxon>
        <taxon>Peronosporaceae</taxon>
        <taxon>Plasmopara</taxon>
    </lineage>
</organism>
<dbReference type="GlyCosmos" id="P0CV29">
    <property type="glycosylation" value="2 sites, No reported glycans"/>
</dbReference>
<dbReference type="GO" id="GO:0005576">
    <property type="term" value="C:extracellular region"/>
    <property type="evidence" value="ECO:0007669"/>
    <property type="project" value="UniProtKB-SubCell"/>
</dbReference>
<dbReference type="GO" id="GO:0030430">
    <property type="term" value="C:host cell cytoplasm"/>
    <property type="evidence" value="ECO:0007669"/>
    <property type="project" value="UniProtKB-SubCell"/>
</dbReference>
<dbReference type="GO" id="GO:0042025">
    <property type="term" value="C:host cell nucleus"/>
    <property type="evidence" value="ECO:0007669"/>
    <property type="project" value="UniProtKB-SubCell"/>
</dbReference>
<protein>
    <recommendedName>
        <fullName evidence="4">Secreted RxLR effector protein 83</fullName>
    </recommendedName>
</protein>
<accession>P0CV29</accession>
<evidence type="ECO:0000255" key="1"/>
<evidence type="ECO:0000255" key="2">
    <source>
        <dbReference type="PROSITE-ProRule" id="PRU00498"/>
    </source>
</evidence>
<evidence type="ECO:0000269" key="3">
    <source>
    </source>
</evidence>
<evidence type="ECO:0000303" key="4">
    <source>
    </source>
</evidence>
<evidence type="ECO:0000305" key="5"/>
<evidence type="ECO:0000305" key="6">
    <source>
    </source>
</evidence>
<gene>
    <name evidence="4" type="primary">RXLR83</name>
</gene>
<feature type="signal peptide" evidence="1">
    <location>
        <begin position="1"/>
        <end position="21"/>
    </location>
</feature>
<feature type="chain" id="PRO_0000447938" description="Secreted RxLR effector protein 83">
    <location>
        <begin position="22"/>
        <end position="160"/>
    </location>
</feature>
<feature type="short sequence motif" description="RxLR" evidence="6">
    <location>
        <begin position="27"/>
        <end position="30"/>
    </location>
</feature>
<feature type="glycosylation site" description="N-linked (GlcNAc...) asparagine" evidence="2">
    <location>
        <position position="39"/>
    </location>
</feature>
<feature type="glycosylation site" description="N-linked (GlcNAc...) asparagine" evidence="2">
    <location>
        <position position="131"/>
    </location>
</feature>
<name>RLR83_PLAVT</name>
<sequence>MLVLLAATFFIYISRLTSTDALQLIQRGLRGKSETFDANATIVPEISESKRVIFGPKPTDLQHEEALVASYADPFKAALSIFKLLGANKFHQMTSSKTQLRYAFVKLRRWSQRPIAEPKRSWWQWRSKTGNKSRDDLAQKRGFRSWWSGRHKAKNAKRVA</sequence>
<reference key="1">
    <citation type="journal article" date="2018" name="Front. Plant Sci.">
        <title>In planta functional analysis and subcellular localization of the oomycete pathogen Plasmopara viticola candidate RXLR effector repertoire.</title>
        <authorList>
            <person name="Liu Y."/>
            <person name="Lan X."/>
            <person name="Song S."/>
            <person name="Yin L."/>
            <person name="Dry I.B."/>
            <person name="Qu J."/>
            <person name="Xiang J."/>
            <person name="Lu J."/>
        </authorList>
    </citation>
    <scope>NUCLEOTIDE SEQUENCE [MRNA]</scope>
    <scope>DOMAIN</scope>
    <scope>FUNCTION</scope>
    <scope>SUBCELLULAR LOCATION</scope>
</reference>